<name>EDS1_YEAST</name>
<comment type="subunit">
    <text>Binds DNA in a sequence-specific manner.</text>
</comment>
<comment type="subcellular location">
    <subcellularLocation>
        <location evidence="3">Nucleus</location>
    </subcellularLocation>
</comment>
<comment type="similarity">
    <text evidence="3">Belongs to the EDS1/RGT1 family.</text>
</comment>
<protein>
    <recommendedName>
        <fullName>Transcriptional regulatory protein EDS1</fullName>
    </recommendedName>
    <alternativeName>
        <fullName>Expression dependent on SLT2 protein 1</fullName>
    </alternativeName>
</protein>
<organism>
    <name type="scientific">Saccharomyces cerevisiae (strain ATCC 204508 / S288c)</name>
    <name type="common">Baker's yeast</name>
    <dbReference type="NCBI Taxonomy" id="559292"/>
    <lineage>
        <taxon>Eukaryota</taxon>
        <taxon>Fungi</taxon>
        <taxon>Dikarya</taxon>
        <taxon>Ascomycota</taxon>
        <taxon>Saccharomycotina</taxon>
        <taxon>Saccharomycetes</taxon>
        <taxon>Saccharomycetales</taxon>
        <taxon>Saccharomycetaceae</taxon>
        <taxon>Saccharomyces</taxon>
    </lineage>
</organism>
<feature type="chain" id="PRO_0000114991" description="Transcriptional regulatory protein EDS1">
    <location>
        <begin position="1"/>
        <end position="919"/>
    </location>
</feature>
<feature type="DNA-binding region" description="Zn(2)-C6 fungal-type" evidence="1">
    <location>
        <begin position="56"/>
        <end position="85"/>
    </location>
</feature>
<feature type="region of interest" description="Disordered" evidence="2">
    <location>
        <begin position="1"/>
        <end position="54"/>
    </location>
</feature>
<feature type="region of interest" description="Disordered" evidence="2">
    <location>
        <begin position="297"/>
        <end position="338"/>
    </location>
</feature>
<feature type="compositionally biased region" description="Polar residues" evidence="2">
    <location>
        <begin position="23"/>
        <end position="36"/>
    </location>
</feature>
<feature type="compositionally biased region" description="Basic and acidic residues" evidence="2">
    <location>
        <begin position="37"/>
        <end position="46"/>
    </location>
</feature>
<feature type="compositionally biased region" description="Basic and acidic residues" evidence="2">
    <location>
        <begin position="304"/>
        <end position="317"/>
    </location>
</feature>
<feature type="compositionally biased region" description="Polar residues" evidence="2">
    <location>
        <begin position="318"/>
        <end position="338"/>
    </location>
</feature>
<accession>P38073</accession>
<accession>D6VQ33</accession>
<dbReference type="EMBL" id="X76078">
    <property type="protein sequence ID" value="CAA53688.1"/>
    <property type="molecule type" value="Genomic_DNA"/>
</dbReference>
<dbReference type="EMBL" id="Z35902">
    <property type="protein sequence ID" value="CAA84975.1"/>
    <property type="molecule type" value="Genomic_DNA"/>
</dbReference>
<dbReference type="EMBL" id="BK006936">
    <property type="protein sequence ID" value="DAA07153.1"/>
    <property type="molecule type" value="Genomic_DNA"/>
</dbReference>
<dbReference type="PIR" id="S45889">
    <property type="entry name" value="S45889"/>
</dbReference>
<dbReference type="RefSeq" id="NP_009589.1">
    <property type="nucleotide sequence ID" value="NM_001178381.1"/>
</dbReference>
<dbReference type="BioGRID" id="32734">
    <property type="interactions" value="119"/>
</dbReference>
<dbReference type="DIP" id="DIP-4895N"/>
<dbReference type="FunCoup" id="P38073">
    <property type="interactions" value="209"/>
</dbReference>
<dbReference type="IntAct" id="P38073">
    <property type="interactions" value="1"/>
</dbReference>
<dbReference type="STRING" id="4932.YBR033W"/>
<dbReference type="iPTMnet" id="P38073"/>
<dbReference type="PaxDb" id="4932-YBR033W"/>
<dbReference type="PeptideAtlas" id="P38073"/>
<dbReference type="EnsemblFungi" id="YBR033W_mRNA">
    <property type="protein sequence ID" value="YBR033W"/>
    <property type="gene ID" value="YBR033W"/>
</dbReference>
<dbReference type="GeneID" id="852321"/>
<dbReference type="KEGG" id="sce:YBR033W"/>
<dbReference type="AGR" id="SGD:S000000237"/>
<dbReference type="SGD" id="S000000237">
    <property type="gene designation" value="EDS1"/>
</dbReference>
<dbReference type="VEuPathDB" id="FungiDB:YBR033W"/>
<dbReference type="eggNOG" id="ENOG502QRVJ">
    <property type="taxonomic scope" value="Eukaryota"/>
</dbReference>
<dbReference type="GeneTree" id="ENSGT00940000176717"/>
<dbReference type="HOGENOM" id="CLU_006525_0_0_1"/>
<dbReference type="InParanoid" id="P38073"/>
<dbReference type="OMA" id="HILENCC"/>
<dbReference type="OrthoDB" id="5426978at2759"/>
<dbReference type="BioCyc" id="YEAST:G3O-29010-MONOMER"/>
<dbReference type="BioGRID-ORCS" id="852321">
    <property type="hits" value="3 hits in 13 CRISPR screens"/>
</dbReference>
<dbReference type="PRO" id="PR:P38073"/>
<dbReference type="Proteomes" id="UP000002311">
    <property type="component" value="Chromosome II"/>
</dbReference>
<dbReference type="RNAct" id="P38073">
    <property type="molecule type" value="protein"/>
</dbReference>
<dbReference type="GO" id="GO:0005634">
    <property type="term" value="C:nucleus"/>
    <property type="evidence" value="ECO:0007669"/>
    <property type="project" value="UniProtKB-SubCell"/>
</dbReference>
<dbReference type="GO" id="GO:0000981">
    <property type="term" value="F:DNA-binding transcription factor activity, RNA polymerase II-specific"/>
    <property type="evidence" value="ECO:0007669"/>
    <property type="project" value="InterPro"/>
</dbReference>
<dbReference type="GO" id="GO:0043565">
    <property type="term" value="F:sequence-specific DNA binding"/>
    <property type="evidence" value="ECO:0007005"/>
    <property type="project" value="SGD"/>
</dbReference>
<dbReference type="GO" id="GO:0008270">
    <property type="term" value="F:zinc ion binding"/>
    <property type="evidence" value="ECO:0007669"/>
    <property type="project" value="InterPro"/>
</dbReference>
<dbReference type="CDD" id="cd00067">
    <property type="entry name" value="GAL4"/>
    <property type="match status" value="1"/>
</dbReference>
<dbReference type="Gene3D" id="4.10.240.10">
    <property type="entry name" value="Zn(2)-C6 fungal-type DNA-binding domain"/>
    <property type="match status" value="1"/>
</dbReference>
<dbReference type="InterPro" id="IPR050797">
    <property type="entry name" value="Carb_Metab_Trans_Reg"/>
</dbReference>
<dbReference type="InterPro" id="IPR036864">
    <property type="entry name" value="Zn2-C6_fun-type_DNA-bd_sf"/>
</dbReference>
<dbReference type="InterPro" id="IPR001138">
    <property type="entry name" value="Zn2Cys6_DnaBD"/>
</dbReference>
<dbReference type="PANTHER" id="PTHR31668:SF26">
    <property type="entry name" value="GLUCOSE TRANSPORT TRANSCRIPTION REGULATOR RGT1-RELATED"/>
    <property type="match status" value="1"/>
</dbReference>
<dbReference type="PANTHER" id="PTHR31668">
    <property type="entry name" value="GLUCOSE TRANSPORT TRANSCRIPTION REGULATOR RGT1-RELATED-RELATED"/>
    <property type="match status" value="1"/>
</dbReference>
<dbReference type="Pfam" id="PF00172">
    <property type="entry name" value="Zn_clus"/>
    <property type="match status" value="1"/>
</dbReference>
<dbReference type="SMART" id="SM00066">
    <property type="entry name" value="GAL4"/>
    <property type="match status" value="1"/>
</dbReference>
<dbReference type="SUPFAM" id="SSF57701">
    <property type="entry name" value="Zn2/Cys6 DNA-binding domain"/>
    <property type="match status" value="1"/>
</dbReference>
<dbReference type="PROSITE" id="PS00463">
    <property type="entry name" value="ZN2_CY6_FUNGAL_1"/>
    <property type="match status" value="1"/>
</dbReference>
<dbReference type="PROSITE" id="PS50048">
    <property type="entry name" value="ZN2_CY6_FUNGAL_2"/>
    <property type="match status" value="1"/>
</dbReference>
<reference key="1">
    <citation type="journal article" date="1994" name="Yeast">
        <title>The complete sequence of a 33 kb fragment on the right arm of chromosome II from Saccharomyces cerevisiae reveals 16 open reading frames, including ten new open reading frames, five previously identified genes and a homologue of the SCO1 gene.</title>
        <authorList>
            <person name="Smits P.H.M."/>
            <person name="de Haan M."/>
            <person name="Maat C."/>
            <person name="Grivell L.A."/>
        </authorList>
    </citation>
    <scope>NUCLEOTIDE SEQUENCE [GENOMIC DNA]</scope>
    <source>
        <strain>ATCC 204508 / S288c</strain>
    </source>
</reference>
<reference key="2">
    <citation type="journal article" date="1994" name="EMBO J.">
        <title>Complete DNA sequence of yeast chromosome II.</title>
        <authorList>
            <person name="Feldmann H."/>
            <person name="Aigle M."/>
            <person name="Aljinovic G."/>
            <person name="Andre B."/>
            <person name="Baclet M.C."/>
            <person name="Barthe C."/>
            <person name="Baur A."/>
            <person name="Becam A.-M."/>
            <person name="Biteau N."/>
            <person name="Boles E."/>
            <person name="Brandt T."/>
            <person name="Brendel M."/>
            <person name="Brueckner M."/>
            <person name="Bussereau F."/>
            <person name="Christiansen C."/>
            <person name="Contreras R."/>
            <person name="Crouzet M."/>
            <person name="Cziepluch C."/>
            <person name="Demolis N."/>
            <person name="Delaveau T."/>
            <person name="Doignon F."/>
            <person name="Domdey H."/>
            <person name="Duesterhus S."/>
            <person name="Dubois E."/>
            <person name="Dujon B."/>
            <person name="El Bakkoury M."/>
            <person name="Entian K.-D."/>
            <person name="Feuermann M."/>
            <person name="Fiers W."/>
            <person name="Fobo G.M."/>
            <person name="Fritz C."/>
            <person name="Gassenhuber J."/>
            <person name="Glansdorff N."/>
            <person name="Goffeau A."/>
            <person name="Grivell L.A."/>
            <person name="de Haan M."/>
            <person name="Hein C."/>
            <person name="Herbert C.J."/>
            <person name="Hollenberg C.P."/>
            <person name="Holmstroem K."/>
            <person name="Jacq C."/>
            <person name="Jacquet M."/>
            <person name="Jauniaux J.-C."/>
            <person name="Jonniaux J.-L."/>
            <person name="Kallesoee T."/>
            <person name="Kiesau P."/>
            <person name="Kirchrath L."/>
            <person name="Koetter P."/>
            <person name="Korol S."/>
            <person name="Liebl S."/>
            <person name="Logghe M."/>
            <person name="Lohan A.J.E."/>
            <person name="Louis E.J."/>
            <person name="Li Z.Y."/>
            <person name="Maat M.J."/>
            <person name="Mallet L."/>
            <person name="Mannhaupt G."/>
            <person name="Messenguy F."/>
            <person name="Miosga T."/>
            <person name="Molemans F."/>
            <person name="Mueller S."/>
            <person name="Nasr F."/>
            <person name="Obermaier B."/>
            <person name="Perea J."/>
            <person name="Pierard A."/>
            <person name="Piravandi E."/>
            <person name="Pohl F.M."/>
            <person name="Pohl T.M."/>
            <person name="Potier S."/>
            <person name="Proft M."/>
            <person name="Purnelle B."/>
            <person name="Ramezani Rad M."/>
            <person name="Rieger M."/>
            <person name="Rose M."/>
            <person name="Schaaff-Gerstenschlaeger I."/>
            <person name="Scherens B."/>
            <person name="Schwarzlose C."/>
            <person name="Skala J."/>
            <person name="Slonimski P.P."/>
            <person name="Smits P.H.M."/>
            <person name="Souciet J.-L."/>
            <person name="Steensma H.Y."/>
            <person name="Stucka R."/>
            <person name="Urrestarazu L.A."/>
            <person name="van der Aart Q.J.M."/>
            <person name="Van Dyck L."/>
            <person name="Vassarotti A."/>
            <person name="Vetter I."/>
            <person name="Vierendeels F."/>
            <person name="Vissers S."/>
            <person name="Wagner G."/>
            <person name="de Wergifosse P."/>
            <person name="Wolfe K.H."/>
            <person name="Zagulski M."/>
            <person name="Zimmermann F.K."/>
            <person name="Mewes H.-W."/>
            <person name="Kleine K."/>
        </authorList>
    </citation>
    <scope>NUCLEOTIDE SEQUENCE [LARGE SCALE GENOMIC DNA]</scope>
    <source>
        <strain>ATCC 204508 / S288c</strain>
    </source>
</reference>
<reference key="3">
    <citation type="journal article" date="2014" name="G3 (Bethesda)">
        <title>The reference genome sequence of Saccharomyces cerevisiae: Then and now.</title>
        <authorList>
            <person name="Engel S.R."/>
            <person name="Dietrich F.S."/>
            <person name="Fisk D.G."/>
            <person name="Binkley G."/>
            <person name="Balakrishnan R."/>
            <person name="Costanzo M.C."/>
            <person name="Dwight S.S."/>
            <person name="Hitz B.C."/>
            <person name="Karra K."/>
            <person name="Nash R.S."/>
            <person name="Weng S."/>
            <person name="Wong E.D."/>
            <person name="Lloyd P."/>
            <person name="Skrzypek M.S."/>
            <person name="Miyasato S.R."/>
            <person name="Simison M."/>
            <person name="Cherry J.M."/>
        </authorList>
    </citation>
    <scope>GENOME REANNOTATION</scope>
    <source>
        <strain>ATCC 204508 / S288c</strain>
    </source>
</reference>
<reference key="4">
    <citation type="journal article" date="2008" name="Mol. Cell">
        <title>A library of yeast transcription factor motifs reveals a widespread function for Rsc3 in targeting nucleosome exclusion at promoters.</title>
        <authorList>
            <person name="Badis G."/>
            <person name="Chan E.T."/>
            <person name="van Bakel H."/>
            <person name="Pena-Castillo L."/>
            <person name="Tillo D."/>
            <person name="Tsui K."/>
            <person name="Carlson C.D."/>
            <person name="Gossett A.J."/>
            <person name="Hasinoff M.J."/>
            <person name="Warren C.L."/>
            <person name="Gebbia M."/>
            <person name="Talukder S."/>
            <person name="Yang A."/>
            <person name="Mnaimneh S."/>
            <person name="Terterov D."/>
            <person name="Coburn D."/>
            <person name="Li Yeo A."/>
            <person name="Yeo Z.X."/>
            <person name="Clarke N.D."/>
            <person name="Lieb J.D."/>
            <person name="Ansari A.Z."/>
            <person name="Nislow C."/>
            <person name="Hughes T.R."/>
        </authorList>
    </citation>
    <scope>DNA-BINDING</scope>
</reference>
<reference key="5">
    <citation type="journal article" date="2009" name="Science">
        <title>Global analysis of Cdk1 substrate phosphorylation sites provides insights into evolution.</title>
        <authorList>
            <person name="Holt L.J."/>
            <person name="Tuch B.B."/>
            <person name="Villen J."/>
            <person name="Johnson A.D."/>
            <person name="Gygi S.P."/>
            <person name="Morgan D.O."/>
        </authorList>
    </citation>
    <scope>IDENTIFICATION BY MASS SPECTROMETRY [LARGE SCALE ANALYSIS]</scope>
</reference>
<evidence type="ECO:0000255" key="1">
    <source>
        <dbReference type="PROSITE-ProRule" id="PRU00227"/>
    </source>
</evidence>
<evidence type="ECO:0000256" key="2">
    <source>
        <dbReference type="SAM" id="MobiDB-lite"/>
    </source>
</evidence>
<evidence type="ECO:0000305" key="3"/>
<sequence>MSHHVPNLYGTPIRDPHERKRNSASMGEVNQSVSSRNCERGSEKGTKQRKKASHACDQCRRKRIKCRFDKHTGVCQGCLEVGEKCQFIRVPLKRGPAKKRGSVVSIEKFSSDNDPLQYRPRTHSYPMNSGNNYLPSLARNSSFPSISSLFVPSITAQSQQFVKVPYDDIKRRSSLAILGSDSSISTEFGGNYRLDENLNVRQEGKDIVAKGMITPVEEMGACSSNVRRQGSQSLPIQEQRASPYINPFISGRSRLSSLSYTSEATTSEGNTQGKNQCMLTPNSVRSIEKERLNSLTAGFPNKKLGTDGRSDKWDKNSTWKPVYRSSNPSHPSTEKNVSLNQEASAKPLMLGTYRQFDATSFYKVLGIYYNFFHINFPVIPINKSKFTDMLDPEKPNVIDEIRQINNEIIQCFKTALEVLVFCKIKQRRSSKSTKSWSRDSLCDFQKGLYYIQNFNKCIADCFQSLITIKPVLKQNSSVIPSRIKFIYFSTIIVLNFILILAGEESSLLLGPSVGVFNEFQAHKLFLPFQNTSPMLLLNSNEESGDEILDYAVLFKRLYILLNILDTLQSFRLGQPKLINLNFGSAIETYFSDKTGHNQVVEKAPVALDNILRNLKLGEFITYFVLNRKSLQVNVPHHLLFTNQTDYGEFAVEKGEHDNIAGKFETLLKKKEILIRKLLNIEQKNDHILENCCNSDAEMKNIGELVCSMITLVSGILDSITNMNAENSVDLDSKPLPNAYFAQDSEEELMSPTQSITSNLASEENTRCTTKDLMGTVSIFMLPMVEECYNIISLIGPIPTTLISLYIRNGNMAKGINDRIMTLSTALNELVQITALFNTLEPFRKNAHDRAKRYYVSATSSTGCYESVMKSMYSGKCAASNASNVAPSEEENKKILKKFADIGWKLMDDSELGCCCCFFN</sequence>
<proteinExistence type="evidence at protein level"/>
<keyword id="KW-0238">DNA-binding</keyword>
<keyword id="KW-0479">Metal-binding</keyword>
<keyword id="KW-0539">Nucleus</keyword>
<keyword id="KW-1185">Reference proteome</keyword>
<keyword id="KW-0804">Transcription</keyword>
<keyword id="KW-0805">Transcription regulation</keyword>
<keyword id="KW-0862">Zinc</keyword>
<gene>
    <name type="primary">EDS1</name>
    <name type="ordered locus">YBR033W</name>
    <name type="ORF">YBR0318</name>
</gene>